<reference key="1">
    <citation type="journal article" date="2005" name="Proc. Natl. Acad. Sci. U.S.A.">
        <title>Complete genome sequence of Vibrio fischeri: a symbiotic bacterium with pathogenic congeners.</title>
        <authorList>
            <person name="Ruby E.G."/>
            <person name="Urbanowski M."/>
            <person name="Campbell J."/>
            <person name="Dunn A."/>
            <person name="Faini M."/>
            <person name="Gunsalus R."/>
            <person name="Lostroh P."/>
            <person name="Lupp C."/>
            <person name="McCann J."/>
            <person name="Millikan D."/>
            <person name="Schaefer A."/>
            <person name="Stabb E."/>
            <person name="Stevens A."/>
            <person name="Visick K."/>
            <person name="Whistler C."/>
            <person name="Greenberg E.P."/>
        </authorList>
    </citation>
    <scope>NUCLEOTIDE SEQUENCE [LARGE SCALE GENOMIC DNA]</scope>
    <source>
        <strain>ATCC 700601 / ES114</strain>
    </source>
</reference>
<evidence type="ECO:0000255" key="1">
    <source>
        <dbReference type="HAMAP-Rule" id="MF_00382"/>
    </source>
</evidence>
<evidence type="ECO:0000305" key="2"/>
<comment type="function">
    <text evidence="1">Binds directly to 23S ribosomal RNA and is necessary for the in vitro assembly process of the 50S ribosomal subunit. It is not involved in the protein synthesizing functions of that subunit.</text>
</comment>
<comment type="similarity">
    <text evidence="1">Belongs to the bacterial ribosomal protein bL20 family.</text>
</comment>
<feature type="chain" id="PRO_0000243756" description="Large ribosomal subunit protein bL20">
    <location>
        <begin position="1"/>
        <end position="117"/>
    </location>
</feature>
<sequence>MPRVKRGVQARARHKKVLKQAKGYYGARSRVYRVAFQAVTKAGQYAYRDRRNKKRVFRQLWIARINAAARQNEMSYSRFINGLKKASIEIDRKILADIAVFDKVAFAALVEKAKAAL</sequence>
<name>RL20_ALIF1</name>
<organism>
    <name type="scientific">Aliivibrio fischeri (strain ATCC 700601 / ES114)</name>
    <name type="common">Vibrio fischeri</name>
    <dbReference type="NCBI Taxonomy" id="312309"/>
    <lineage>
        <taxon>Bacteria</taxon>
        <taxon>Pseudomonadati</taxon>
        <taxon>Pseudomonadota</taxon>
        <taxon>Gammaproteobacteria</taxon>
        <taxon>Vibrionales</taxon>
        <taxon>Vibrionaceae</taxon>
        <taxon>Aliivibrio</taxon>
    </lineage>
</organism>
<protein>
    <recommendedName>
        <fullName evidence="1">Large ribosomal subunit protein bL20</fullName>
    </recommendedName>
    <alternativeName>
        <fullName evidence="2">50S ribosomal protein L20</fullName>
    </alternativeName>
</protein>
<dbReference type="EMBL" id="CP000020">
    <property type="protein sequence ID" value="AAW85713.1"/>
    <property type="molecule type" value="Genomic_DNA"/>
</dbReference>
<dbReference type="RefSeq" id="WP_005419081.1">
    <property type="nucleotide sequence ID" value="NZ_CAWLES010000001.1"/>
</dbReference>
<dbReference type="RefSeq" id="YP_204601.1">
    <property type="nucleotide sequence ID" value="NC_006840.2"/>
</dbReference>
<dbReference type="SMR" id="Q5E5I3"/>
<dbReference type="STRING" id="312309.VF_1218"/>
<dbReference type="EnsemblBacteria" id="AAW85713">
    <property type="protein sequence ID" value="AAW85713"/>
    <property type="gene ID" value="VF_1218"/>
</dbReference>
<dbReference type="GeneID" id="54163889"/>
<dbReference type="KEGG" id="vfi:VF_1218"/>
<dbReference type="PATRIC" id="fig|312309.11.peg.1225"/>
<dbReference type="eggNOG" id="COG0292">
    <property type="taxonomic scope" value="Bacteria"/>
</dbReference>
<dbReference type="HOGENOM" id="CLU_123265_0_1_6"/>
<dbReference type="OrthoDB" id="9808966at2"/>
<dbReference type="Proteomes" id="UP000000537">
    <property type="component" value="Chromosome I"/>
</dbReference>
<dbReference type="GO" id="GO:1990904">
    <property type="term" value="C:ribonucleoprotein complex"/>
    <property type="evidence" value="ECO:0007669"/>
    <property type="project" value="UniProtKB-KW"/>
</dbReference>
<dbReference type="GO" id="GO:0005840">
    <property type="term" value="C:ribosome"/>
    <property type="evidence" value="ECO:0007669"/>
    <property type="project" value="UniProtKB-KW"/>
</dbReference>
<dbReference type="GO" id="GO:0019843">
    <property type="term" value="F:rRNA binding"/>
    <property type="evidence" value="ECO:0007669"/>
    <property type="project" value="UniProtKB-UniRule"/>
</dbReference>
<dbReference type="GO" id="GO:0003735">
    <property type="term" value="F:structural constituent of ribosome"/>
    <property type="evidence" value="ECO:0007669"/>
    <property type="project" value="InterPro"/>
</dbReference>
<dbReference type="GO" id="GO:0000027">
    <property type="term" value="P:ribosomal large subunit assembly"/>
    <property type="evidence" value="ECO:0007669"/>
    <property type="project" value="UniProtKB-UniRule"/>
</dbReference>
<dbReference type="GO" id="GO:0006412">
    <property type="term" value="P:translation"/>
    <property type="evidence" value="ECO:0007669"/>
    <property type="project" value="InterPro"/>
</dbReference>
<dbReference type="CDD" id="cd07026">
    <property type="entry name" value="Ribosomal_L20"/>
    <property type="match status" value="1"/>
</dbReference>
<dbReference type="FunFam" id="1.10.1900.20:FF:000001">
    <property type="entry name" value="50S ribosomal protein L20"/>
    <property type="match status" value="1"/>
</dbReference>
<dbReference type="Gene3D" id="6.10.160.10">
    <property type="match status" value="1"/>
</dbReference>
<dbReference type="Gene3D" id="1.10.1900.20">
    <property type="entry name" value="Ribosomal protein L20"/>
    <property type="match status" value="1"/>
</dbReference>
<dbReference type="HAMAP" id="MF_00382">
    <property type="entry name" value="Ribosomal_bL20"/>
    <property type="match status" value="1"/>
</dbReference>
<dbReference type="InterPro" id="IPR005813">
    <property type="entry name" value="Ribosomal_bL20"/>
</dbReference>
<dbReference type="InterPro" id="IPR049946">
    <property type="entry name" value="RIBOSOMAL_L20_CS"/>
</dbReference>
<dbReference type="InterPro" id="IPR035566">
    <property type="entry name" value="Ribosomal_protein_bL20_C"/>
</dbReference>
<dbReference type="NCBIfam" id="TIGR01032">
    <property type="entry name" value="rplT_bact"/>
    <property type="match status" value="1"/>
</dbReference>
<dbReference type="PANTHER" id="PTHR10986">
    <property type="entry name" value="39S RIBOSOMAL PROTEIN L20"/>
    <property type="match status" value="1"/>
</dbReference>
<dbReference type="Pfam" id="PF00453">
    <property type="entry name" value="Ribosomal_L20"/>
    <property type="match status" value="1"/>
</dbReference>
<dbReference type="PRINTS" id="PR00062">
    <property type="entry name" value="RIBOSOMALL20"/>
</dbReference>
<dbReference type="SUPFAM" id="SSF74731">
    <property type="entry name" value="Ribosomal protein L20"/>
    <property type="match status" value="1"/>
</dbReference>
<dbReference type="PROSITE" id="PS00937">
    <property type="entry name" value="RIBOSOMAL_L20"/>
    <property type="match status" value="1"/>
</dbReference>
<keyword id="KW-1185">Reference proteome</keyword>
<keyword id="KW-0687">Ribonucleoprotein</keyword>
<keyword id="KW-0689">Ribosomal protein</keyword>
<keyword id="KW-0694">RNA-binding</keyword>
<keyword id="KW-0699">rRNA-binding</keyword>
<gene>
    <name evidence="1" type="primary">rplT</name>
    <name type="ordered locus">VF_1218</name>
</gene>
<proteinExistence type="inferred from homology"/>
<accession>Q5E5I3</accession>